<name>CO8A1_RABIT</name>
<comment type="function">
    <text evidence="1">Macromolecular component of the subendothelium. Major component of the Descemet's membrane (basement membrane) of corneal endothelial cells. Also a component of the endothelia of blood vessels. Necessary for migration and proliferation of vascular smooth muscle cells and thus, has a potential role in the maintenance of vessel wall integrity and structure, in particular in atherogenesis (By similarity).</text>
</comment>
<comment type="function">
    <text evidence="1">Vastatin, the C-terminal fragment comprising the NC1 domain, inhibits aortic endothelial cell proliferation and causes cell apoptosis.</text>
</comment>
<comment type="subunit">
    <text evidence="1">Homotrimers, or heterotrimers in association with alpha 2(VIII) type collagens. Four homotrimers can form a tetrahedron stabilized by central interacting C-terminal NC1 trimers (By similarity).</text>
</comment>
<comment type="subcellular location">
    <subcellularLocation>
        <location>Secreted</location>
        <location>Extracellular space</location>
        <location>Extracellular matrix</location>
        <location>Basement membrane</location>
    </subcellularLocation>
</comment>
<comment type="PTM">
    <text>Prolines at the third position of the tripeptide repeating unit (G-X-Y) are hydroxylated in some or all of the chains.</text>
</comment>
<comment type="PTM">
    <text evidence="1">Proteolytically cleaved by neutrophil elastase, in vitro. Proteolytic processing produces the C-terminal NC1 domain fragment, vastatin (By similarity).</text>
</comment>
<comment type="miscellaneous">
    <text>4 consecutive G-P-P tripeptides are present at the C-terminus of the triple-helical region. These may provide high thermal stability of this region.</text>
</comment>
<dbReference type="EMBL" id="J05042">
    <property type="protein sequence ID" value="AAA31204.1"/>
    <property type="molecule type" value="mRNA"/>
</dbReference>
<dbReference type="PIR" id="A34246">
    <property type="entry name" value="A34246"/>
</dbReference>
<dbReference type="RefSeq" id="NP_001076135.1">
    <property type="nucleotide sequence ID" value="NM_001082666.1"/>
</dbReference>
<dbReference type="SMR" id="P14282"/>
<dbReference type="FunCoup" id="P14282">
    <property type="interactions" value="110"/>
</dbReference>
<dbReference type="STRING" id="9986.ENSOCUP00000023659"/>
<dbReference type="PaxDb" id="9986-ENSOCUP00000023659"/>
<dbReference type="GeneID" id="100009383"/>
<dbReference type="KEGG" id="ocu:100009383"/>
<dbReference type="CTD" id="1295"/>
<dbReference type="eggNOG" id="ENOG502QRFR">
    <property type="taxonomic scope" value="Eukaryota"/>
</dbReference>
<dbReference type="InParanoid" id="P14282"/>
<dbReference type="OrthoDB" id="6139560at2759"/>
<dbReference type="Proteomes" id="UP000001811">
    <property type="component" value="Unplaced"/>
</dbReference>
<dbReference type="GO" id="GO:0005604">
    <property type="term" value="C:basement membrane"/>
    <property type="evidence" value="ECO:0007669"/>
    <property type="project" value="UniProtKB-SubCell"/>
</dbReference>
<dbReference type="GO" id="GO:0005581">
    <property type="term" value="C:collagen trimer"/>
    <property type="evidence" value="ECO:0007669"/>
    <property type="project" value="UniProtKB-KW"/>
</dbReference>
<dbReference type="GO" id="GO:0005576">
    <property type="term" value="C:extracellular region"/>
    <property type="evidence" value="ECO:0007669"/>
    <property type="project" value="UniProtKB-KW"/>
</dbReference>
<dbReference type="GO" id="GO:0001525">
    <property type="term" value="P:angiogenesis"/>
    <property type="evidence" value="ECO:0007669"/>
    <property type="project" value="UniProtKB-KW"/>
</dbReference>
<dbReference type="GO" id="GO:0007155">
    <property type="term" value="P:cell adhesion"/>
    <property type="evidence" value="ECO:0007669"/>
    <property type="project" value="UniProtKB-KW"/>
</dbReference>
<dbReference type="FunFam" id="2.60.120.40:FF:000001">
    <property type="entry name" value="Complement C1q B chain"/>
    <property type="match status" value="1"/>
</dbReference>
<dbReference type="Gene3D" id="2.60.120.40">
    <property type="match status" value="1"/>
</dbReference>
<dbReference type="InterPro" id="IPR001073">
    <property type="entry name" value="C1q_dom"/>
</dbReference>
<dbReference type="InterPro" id="IPR008160">
    <property type="entry name" value="Collagen"/>
</dbReference>
<dbReference type="InterPro" id="IPR050392">
    <property type="entry name" value="Collagen/C1q_domain"/>
</dbReference>
<dbReference type="InterPro" id="IPR008983">
    <property type="entry name" value="Tumour_necrosis_fac-like_dom"/>
</dbReference>
<dbReference type="PANTHER" id="PTHR15427:SF33">
    <property type="entry name" value="COLLAGEN IV NC1 DOMAIN-CONTAINING PROTEIN"/>
    <property type="match status" value="1"/>
</dbReference>
<dbReference type="PANTHER" id="PTHR15427">
    <property type="entry name" value="EMILIN ELASTIN MICROFIBRIL INTERFACE-LOCATED PROTEIN ELASTIN MICROFIBRIL INTERFACER"/>
    <property type="match status" value="1"/>
</dbReference>
<dbReference type="Pfam" id="PF00386">
    <property type="entry name" value="C1q"/>
    <property type="match status" value="1"/>
</dbReference>
<dbReference type="Pfam" id="PF01391">
    <property type="entry name" value="Collagen"/>
    <property type="match status" value="2"/>
</dbReference>
<dbReference type="PRINTS" id="PR00007">
    <property type="entry name" value="COMPLEMNTC1Q"/>
</dbReference>
<dbReference type="SMART" id="SM00110">
    <property type="entry name" value="C1Q"/>
    <property type="match status" value="1"/>
</dbReference>
<dbReference type="SUPFAM" id="SSF49842">
    <property type="entry name" value="TNF-like"/>
    <property type="match status" value="1"/>
</dbReference>
<dbReference type="PROSITE" id="PS50871">
    <property type="entry name" value="C1Q"/>
    <property type="match status" value="1"/>
</dbReference>
<sequence length="744" mass="73358">MAVPPGPPQLLQVLLTISLGSIRLIQAGAYYGIKPLPPQIPPQMPPQIPQYQPLGQQVPHMPLAKDGLTMGKEMPHAQYGKEYPHLPQYMKEVQPVPRMGKEAVPKKGKEIPLASLRGEQGPRGEPGPRGPPGPPGLPGQGIPGIKGKPGPQGYPGVGKPGMPGMPGKPGAMGMPGAKGEIGPKGEIGPMGIPGPQGPPGPHGLPGIGKPGGPGLPGQPGAKGDRGPKGPPGPPGLQGPKGEKGFGMPGLPGLKGPPGMHGPPGPVGLPGVGKPGVTGFPGPQGPLGKPGPPGEPGPQGPIGVPGVQGPPGLPGVGKPGQDGIPGQPGFPGGKGEQGLPGLPGPPGLPGVGKPGFPGPKGDRGIGGVPGALGPRGEKGPVGAPGMGGPPGEPGLPGIPGPMGPPGAIGFPGPKGEGGIVGPQGPPGPKGEPGLQGFPGKPGFLGEVGPPGIRGLPGPIGPKGEAGHKGLPGLPGVPGLLGPKGEPGIPGDQGLQGPPGIPGITGPSGPIGPPGIPGPKGEPGLPGPPGFPGVGKPGVAGLHGPPGKPGALGPQGQPGLPGPPGPPGPPGPPAVMPPTPAPQGEYLPDMGLGIDGVKTPHAYAAKKGKNGGPAYEMPAFTAELTAPFPPVGAPIKFDRLLYNGRQNYNPQTGIFTCEVPGVYYFAYHVHCKGGNVWVALFKNNEPVMYTYDEYKKGFLDQASGSAVLLLRPGDRVFLQMPSEQAAGLYAGQYVHSSFSGYLLYPM</sequence>
<protein>
    <recommendedName>
        <fullName>Collagen alpha-1(VIII) chain</fullName>
    </recommendedName>
    <alternativeName>
        <fullName>Endothelial collagen</fullName>
    </alternativeName>
    <component>
        <recommendedName>
            <fullName>Vastatin</fullName>
        </recommendedName>
    </component>
</protein>
<evidence type="ECO:0000250" key="1"/>
<evidence type="ECO:0000255" key="2"/>
<evidence type="ECO:0000255" key="3">
    <source>
        <dbReference type="PROSITE-ProRule" id="PRU00368"/>
    </source>
</evidence>
<evidence type="ECO:0000256" key="4">
    <source>
        <dbReference type="SAM" id="MobiDB-lite"/>
    </source>
</evidence>
<gene>
    <name type="primary">COL8A1</name>
</gene>
<proteinExistence type="evidence at transcript level"/>
<accession>P14282</accession>
<organism>
    <name type="scientific">Oryctolagus cuniculus</name>
    <name type="common">Rabbit</name>
    <dbReference type="NCBI Taxonomy" id="9986"/>
    <lineage>
        <taxon>Eukaryota</taxon>
        <taxon>Metazoa</taxon>
        <taxon>Chordata</taxon>
        <taxon>Craniata</taxon>
        <taxon>Vertebrata</taxon>
        <taxon>Euteleostomi</taxon>
        <taxon>Mammalia</taxon>
        <taxon>Eutheria</taxon>
        <taxon>Euarchontoglires</taxon>
        <taxon>Glires</taxon>
        <taxon>Lagomorpha</taxon>
        <taxon>Leporidae</taxon>
        <taxon>Oryctolagus</taxon>
    </lineage>
</organism>
<feature type="signal peptide" evidence="2">
    <location>
        <begin position="1"/>
        <end position="27"/>
    </location>
</feature>
<feature type="chain" id="PRO_0000005764" description="Collagen alpha-1(VIII) chain">
    <location>
        <begin position="28"/>
        <end position="744"/>
    </location>
</feature>
<feature type="chain" id="PRO_0000390486" description="Vastatin">
    <location>
        <begin position="572"/>
        <end position="744"/>
    </location>
</feature>
<feature type="domain" description="C1q" evidence="3">
    <location>
        <begin position="611"/>
        <end position="744"/>
    </location>
</feature>
<feature type="region of interest" description="Nonhelical region (NC2)">
    <location>
        <begin position="29"/>
        <end position="117"/>
    </location>
</feature>
<feature type="region of interest" description="Disordered" evidence="4">
    <location>
        <begin position="101"/>
        <end position="435"/>
    </location>
</feature>
<feature type="region of interest" description="Triple-helical region">
    <location>
        <begin position="118"/>
        <end position="571"/>
    </location>
</feature>
<feature type="region of interest" description="Disordered" evidence="4">
    <location>
        <begin position="478"/>
        <end position="584"/>
    </location>
</feature>
<feature type="region of interest" description="Nonhelical region (NC1)">
    <location>
        <begin position="572"/>
        <end position="744"/>
    </location>
</feature>
<feature type="compositionally biased region" description="Basic and acidic residues" evidence="4">
    <location>
        <begin position="101"/>
        <end position="110"/>
    </location>
</feature>
<feature type="compositionally biased region" description="Pro residues" evidence="4">
    <location>
        <begin position="128"/>
        <end position="137"/>
    </location>
</feature>
<feature type="compositionally biased region" description="Low complexity" evidence="4">
    <location>
        <begin position="168"/>
        <end position="190"/>
    </location>
</feature>
<feature type="compositionally biased region" description="Gly residues" evidence="4">
    <location>
        <begin position="203"/>
        <end position="217"/>
    </location>
</feature>
<feature type="compositionally biased region" description="Pro residues" evidence="4">
    <location>
        <begin position="288"/>
        <end position="298"/>
    </location>
</feature>
<feature type="compositionally biased region" description="Gly residues" evidence="4">
    <location>
        <begin position="328"/>
        <end position="337"/>
    </location>
</feature>
<feature type="compositionally biased region" description="Pro residues" evidence="4">
    <location>
        <begin position="389"/>
        <end position="403"/>
    </location>
</feature>
<feature type="compositionally biased region" description="Gly residues" evidence="4">
    <location>
        <begin position="411"/>
        <end position="420"/>
    </location>
</feature>
<feature type="compositionally biased region" description="Low complexity" evidence="4">
    <location>
        <begin position="478"/>
        <end position="506"/>
    </location>
</feature>
<feature type="compositionally biased region" description="Low complexity" evidence="4">
    <location>
        <begin position="540"/>
        <end position="556"/>
    </location>
</feature>
<feature type="compositionally biased region" description="Pro residues" evidence="4">
    <location>
        <begin position="558"/>
        <end position="579"/>
    </location>
</feature>
<keyword id="KW-0037">Angiogenesis</keyword>
<keyword id="KW-0084">Basement membrane</keyword>
<keyword id="KW-0130">Cell adhesion</keyword>
<keyword id="KW-0176">Collagen</keyword>
<keyword id="KW-0272">Extracellular matrix</keyword>
<keyword id="KW-0379">Hydroxylation</keyword>
<keyword id="KW-1185">Reference proteome</keyword>
<keyword id="KW-0677">Repeat</keyword>
<keyword id="KW-0964">Secreted</keyword>
<keyword id="KW-0732">Signal</keyword>
<reference key="1">
    <citation type="journal article" date="1989" name="J. Biol. Chem.">
        <title>The cloning and sequencing of alpha 1(VIII) collagen cDNAs demonstrate that type VIII collagen is a short chain collagen and contains triple-helical and carboxyl-terminal non-triple-helical domains similar to those of type X collagen.</title>
        <authorList>
            <person name="Yamaguchi N."/>
            <person name="Benya P.D."/>
            <person name="van der Rest M."/>
            <person name="Ninomiya Y."/>
        </authorList>
    </citation>
    <scope>NUCLEOTIDE SEQUENCE [MRNA]</scope>
</reference>